<sequence length="113" mass="13013">MNRLDFVDKPSLRDDIPAFNPGDTINVHVKVIEGAKERLQVFKGVVIRRQGGGIRETFTVRKESYGVGVERTFPVHSPNIDHIEVVTRGDVRRAKLYYLRELRGKKAKIKEKR</sequence>
<keyword id="KW-1185">Reference proteome</keyword>
<keyword id="KW-0687">Ribonucleoprotein</keyword>
<keyword id="KW-0689">Ribosomal protein</keyword>
<dbReference type="EMBL" id="AE000516">
    <property type="protein sequence ID" value="AAK47298.1"/>
    <property type="molecule type" value="Genomic_DNA"/>
</dbReference>
<dbReference type="PIR" id="C70927">
    <property type="entry name" value="C70927"/>
</dbReference>
<dbReference type="RefSeq" id="WP_003414717.1">
    <property type="nucleotide sequence ID" value="NZ_KK341227.1"/>
</dbReference>
<dbReference type="SMR" id="P9WHC8"/>
<dbReference type="GeneID" id="45426891"/>
<dbReference type="KEGG" id="mtc:MT2972"/>
<dbReference type="PATRIC" id="fig|83331.31.peg.3212"/>
<dbReference type="HOGENOM" id="CLU_103507_2_1_11"/>
<dbReference type="Proteomes" id="UP000001020">
    <property type="component" value="Chromosome"/>
</dbReference>
<dbReference type="GO" id="GO:0022625">
    <property type="term" value="C:cytosolic large ribosomal subunit"/>
    <property type="evidence" value="ECO:0007669"/>
    <property type="project" value="TreeGrafter"/>
</dbReference>
<dbReference type="GO" id="GO:0003735">
    <property type="term" value="F:structural constituent of ribosome"/>
    <property type="evidence" value="ECO:0007669"/>
    <property type="project" value="InterPro"/>
</dbReference>
<dbReference type="GO" id="GO:0006412">
    <property type="term" value="P:translation"/>
    <property type="evidence" value="ECO:0007669"/>
    <property type="project" value="UniProtKB-UniRule"/>
</dbReference>
<dbReference type="FunFam" id="2.30.30.790:FF:000001">
    <property type="entry name" value="50S ribosomal protein L19"/>
    <property type="match status" value="1"/>
</dbReference>
<dbReference type="Gene3D" id="2.30.30.790">
    <property type="match status" value="1"/>
</dbReference>
<dbReference type="HAMAP" id="MF_00402">
    <property type="entry name" value="Ribosomal_bL19"/>
    <property type="match status" value="1"/>
</dbReference>
<dbReference type="InterPro" id="IPR001857">
    <property type="entry name" value="Ribosomal_bL19"/>
</dbReference>
<dbReference type="InterPro" id="IPR018257">
    <property type="entry name" value="Ribosomal_bL19_CS"/>
</dbReference>
<dbReference type="InterPro" id="IPR038657">
    <property type="entry name" value="Ribosomal_bL19_sf"/>
</dbReference>
<dbReference type="InterPro" id="IPR008991">
    <property type="entry name" value="Translation_prot_SH3-like_sf"/>
</dbReference>
<dbReference type="NCBIfam" id="TIGR01024">
    <property type="entry name" value="rplS_bact"/>
    <property type="match status" value="1"/>
</dbReference>
<dbReference type="PANTHER" id="PTHR15680:SF9">
    <property type="entry name" value="LARGE RIBOSOMAL SUBUNIT PROTEIN BL19M"/>
    <property type="match status" value="1"/>
</dbReference>
<dbReference type="PANTHER" id="PTHR15680">
    <property type="entry name" value="RIBOSOMAL PROTEIN L19"/>
    <property type="match status" value="1"/>
</dbReference>
<dbReference type="Pfam" id="PF01245">
    <property type="entry name" value="Ribosomal_L19"/>
    <property type="match status" value="1"/>
</dbReference>
<dbReference type="PIRSF" id="PIRSF002191">
    <property type="entry name" value="Ribosomal_L19"/>
    <property type="match status" value="1"/>
</dbReference>
<dbReference type="PRINTS" id="PR00061">
    <property type="entry name" value="RIBOSOMALL19"/>
</dbReference>
<dbReference type="SUPFAM" id="SSF50104">
    <property type="entry name" value="Translation proteins SH3-like domain"/>
    <property type="match status" value="1"/>
</dbReference>
<dbReference type="PROSITE" id="PS01015">
    <property type="entry name" value="RIBOSOMAL_L19"/>
    <property type="match status" value="1"/>
</dbReference>
<accession>P9WHC8</accession>
<accession>L0TB77</accession>
<accession>P66080</accession>
<accession>Q10792</accession>
<feature type="chain" id="PRO_0000428209" description="Large ribosomal subunit protein bL19">
    <location>
        <begin position="1"/>
        <end position="113"/>
    </location>
</feature>
<evidence type="ECO:0000250" key="1"/>
<evidence type="ECO:0000305" key="2"/>
<reference key="1">
    <citation type="journal article" date="2002" name="J. Bacteriol.">
        <title>Whole-genome comparison of Mycobacterium tuberculosis clinical and laboratory strains.</title>
        <authorList>
            <person name="Fleischmann R.D."/>
            <person name="Alland D."/>
            <person name="Eisen J.A."/>
            <person name="Carpenter L."/>
            <person name="White O."/>
            <person name="Peterson J.D."/>
            <person name="DeBoy R.T."/>
            <person name="Dodson R.J."/>
            <person name="Gwinn M.L."/>
            <person name="Haft D.H."/>
            <person name="Hickey E.K."/>
            <person name="Kolonay J.F."/>
            <person name="Nelson W.C."/>
            <person name="Umayam L.A."/>
            <person name="Ermolaeva M.D."/>
            <person name="Salzberg S.L."/>
            <person name="Delcher A."/>
            <person name="Utterback T.R."/>
            <person name="Weidman J.F."/>
            <person name="Khouri H.M."/>
            <person name="Gill J."/>
            <person name="Mikula A."/>
            <person name="Bishai W."/>
            <person name="Jacobs W.R. Jr."/>
            <person name="Venter J.C."/>
            <person name="Fraser C.M."/>
        </authorList>
    </citation>
    <scope>NUCLEOTIDE SEQUENCE [LARGE SCALE GENOMIC DNA]</scope>
    <source>
        <strain>CDC 1551 / Oshkosh</strain>
    </source>
</reference>
<organism>
    <name type="scientific">Mycobacterium tuberculosis (strain CDC 1551 / Oshkosh)</name>
    <dbReference type="NCBI Taxonomy" id="83331"/>
    <lineage>
        <taxon>Bacteria</taxon>
        <taxon>Bacillati</taxon>
        <taxon>Actinomycetota</taxon>
        <taxon>Actinomycetes</taxon>
        <taxon>Mycobacteriales</taxon>
        <taxon>Mycobacteriaceae</taxon>
        <taxon>Mycobacterium</taxon>
        <taxon>Mycobacterium tuberculosis complex</taxon>
    </lineage>
</organism>
<comment type="function">
    <text evidence="1">This protein is located at the 30S-50S ribosomal subunit interface and may play a role in the structure and function of the aminoacyl-tRNA binding site.</text>
</comment>
<comment type="similarity">
    <text evidence="2">Belongs to the bacterial ribosomal protein bL19 family.</text>
</comment>
<protein>
    <recommendedName>
        <fullName evidence="2">Large ribosomal subunit protein bL19</fullName>
    </recommendedName>
    <alternativeName>
        <fullName>50S ribosomal protein L19</fullName>
    </alternativeName>
</protein>
<proteinExistence type="inferred from homology"/>
<gene>
    <name type="primary">rplS</name>
    <name type="ordered locus">MT2972</name>
</gene>
<name>RL19_MYCTO</name>